<keyword id="KW-0687">Ribonucleoprotein</keyword>
<keyword id="KW-0689">Ribosomal protein</keyword>
<comment type="function">
    <text evidence="1">This protein is one of the early assembly proteins of the 50S ribosomal subunit, although it is not seen to bind rRNA by itself. It is important during the early stages of 50S assembly.</text>
</comment>
<comment type="subunit">
    <text evidence="1">Part of the 50S ribosomal subunit.</text>
</comment>
<comment type="similarity">
    <text evidence="1">Belongs to the universal ribosomal protein uL13 family.</text>
</comment>
<comment type="sequence caution" evidence="2">
    <conflict type="erroneous initiation">
        <sequence resource="EMBL-CDS" id="AAM31452"/>
    </conflict>
</comment>
<proteinExistence type="inferred from homology"/>
<feature type="chain" id="PRO_0000261842" description="Large ribosomal subunit protein uL13">
    <location>
        <begin position="1"/>
        <end position="140"/>
    </location>
</feature>
<sequence length="140" mass="15647">MTVIDAKGLILGRLASSVAKQLLSGDEKVYIINAEKAIISGSRAATLREYRETRDRGATEFGPYFPKRPDRILKRTIRGMLPYKRARGRDAMSRLKVYVGVPYELKGAETTTIADADMRLLSSNKYVELGEVSQKMGSKF</sequence>
<organism>
    <name type="scientific">Methanosarcina mazei (strain ATCC BAA-159 / DSM 3647 / Goe1 / Go1 / JCM 11833 / OCM 88)</name>
    <name type="common">Methanosarcina frisia</name>
    <dbReference type="NCBI Taxonomy" id="192952"/>
    <lineage>
        <taxon>Archaea</taxon>
        <taxon>Methanobacteriati</taxon>
        <taxon>Methanobacteriota</taxon>
        <taxon>Stenosarchaea group</taxon>
        <taxon>Methanomicrobia</taxon>
        <taxon>Methanosarcinales</taxon>
        <taxon>Methanosarcinaceae</taxon>
        <taxon>Methanosarcina</taxon>
    </lineage>
</organism>
<name>RL13_METMA</name>
<protein>
    <recommendedName>
        <fullName evidence="1">Large ribosomal subunit protein uL13</fullName>
    </recommendedName>
    <alternativeName>
        <fullName evidence="2">50S ribosomal protein L13</fullName>
    </alternativeName>
</protein>
<dbReference type="EMBL" id="AE008384">
    <property type="protein sequence ID" value="AAM31452.1"/>
    <property type="status" value="ALT_INIT"/>
    <property type="molecule type" value="Genomic_DNA"/>
</dbReference>
<dbReference type="RefSeq" id="WP_011033696.1">
    <property type="nucleotide sequence ID" value="NC_003901.1"/>
</dbReference>
<dbReference type="SMR" id="Q8PW45"/>
<dbReference type="KEGG" id="mma:MM_1756"/>
<dbReference type="PATRIC" id="fig|192952.21.peg.2032"/>
<dbReference type="eggNOG" id="arCOG04242">
    <property type="taxonomic scope" value="Archaea"/>
</dbReference>
<dbReference type="HOGENOM" id="CLU_076922_1_0_2"/>
<dbReference type="Proteomes" id="UP000000595">
    <property type="component" value="Chromosome"/>
</dbReference>
<dbReference type="GO" id="GO:0022625">
    <property type="term" value="C:cytosolic large ribosomal subunit"/>
    <property type="evidence" value="ECO:0007669"/>
    <property type="project" value="TreeGrafter"/>
</dbReference>
<dbReference type="GO" id="GO:0003729">
    <property type="term" value="F:mRNA binding"/>
    <property type="evidence" value="ECO:0007669"/>
    <property type="project" value="TreeGrafter"/>
</dbReference>
<dbReference type="GO" id="GO:0003735">
    <property type="term" value="F:structural constituent of ribosome"/>
    <property type="evidence" value="ECO:0007669"/>
    <property type="project" value="InterPro"/>
</dbReference>
<dbReference type="GO" id="GO:0017148">
    <property type="term" value="P:negative regulation of translation"/>
    <property type="evidence" value="ECO:0007669"/>
    <property type="project" value="TreeGrafter"/>
</dbReference>
<dbReference type="GO" id="GO:0006412">
    <property type="term" value="P:translation"/>
    <property type="evidence" value="ECO:0007669"/>
    <property type="project" value="UniProtKB-UniRule"/>
</dbReference>
<dbReference type="CDD" id="cd00392">
    <property type="entry name" value="Ribosomal_L13"/>
    <property type="match status" value="1"/>
</dbReference>
<dbReference type="FunFam" id="3.90.1180.10:FF:000012">
    <property type="entry name" value="50S ribosomal protein L13"/>
    <property type="match status" value="1"/>
</dbReference>
<dbReference type="Gene3D" id="3.90.1180.10">
    <property type="entry name" value="Ribosomal protein L13"/>
    <property type="match status" value="1"/>
</dbReference>
<dbReference type="HAMAP" id="MF_01366">
    <property type="entry name" value="Ribosomal_uL13"/>
    <property type="match status" value="1"/>
</dbReference>
<dbReference type="InterPro" id="IPR005822">
    <property type="entry name" value="Ribosomal_uL13"/>
</dbReference>
<dbReference type="InterPro" id="IPR005823">
    <property type="entry name" value="Ribosomal_uL13_bac-type"/>
</dbReference>
<dbReference type="InterPro" id="IPR023563">
    <property type="entry name" value="Ribosomal_uL13_CS"/>
</dbReference>
<dbReference type="InterPro" id="IPR005755">
    <property type="entry name" value="Ribosomal_uL13_euk/arc"/>
</dbReference>
<dbReference type="InterPro" id="IPR036899">
    <property type="entry name" value="Ribosomal_uL13_sf"/>
</dbReference>
<dbReference type="NCBIfam" id="TIGR01077">
    <property type="entry name" value="L13_A_E"/>
    <property type="match status" value="1"/>
</dbReference>
<dbReference type="NCBIfam" id="NF005004">
    <property type="entry name" value="PRK06394.1"/>
    <property type="match status" value="1"/>
</dbReference>
<dbReference type="PANTHER" id="PTHR11545:SF3">
    <property type="entry name" value="LARGE RIBOSOMAL SUBUNIT PROTEIN UL13"/>
    <property type="match status" value="1"/>
</dbReference>
<dbReference type="PANTHER" id="PTHR11545">
    <property type="entry name" value="RIBOSOMAL PROTEIN L13"/>
    <property type="match status" value="1"/>
</dbReference>
<dbReference type="Pfam" id="PF00572">
    <property type="entry name" value="Ribosomal_L13"/>
    <property type="match status" value="1"/>
</dbReference>
<dbReference type="PIRSF" id="PIRSF002181">
    <property type="entry name" value="Ribosomal_L13"/>
    <property type="match status" value="1"/>
</dbReference>
<dbReference type="SUPFAM" id="SSF52161">
    <property type="entry name" value="Ribosomal protein L13"/>
    <property type="match status" value="1"/>
</dbReference>
<dbReference type="PROSITE" id="PS00783">
    <property type="entry name" value="RIBOSOMAL_L13"/>
    <property type="match status" value="1"/>
</dbReference>
<reference key="1">
    <citation type="journal article" date="2002" name="J. Mol. Microbiol. Biotechnol.">
        <title>The genome of Methanosarcina mazei: evidence for lateral gene transfer between Bacteria and Archaea.</title>
        <authorList>
            <person name="Deppenmeier U."/>
            <person name="Johann A."/>
            <person name="Hartsch T."/>
            <person name="Merkl R."/>
            <person name="Schmitz R.A."/>
            <person name="Martinez-Arias R."/>
            <person name="Henne A."/>
            <person name="Wiezer A."/>
            <person name="Baeumer S."/>
            <person name="Jacobi C."/>
            <person name="Brueggemann H."/>
            <person name="Lienard T."/>
            <person name="Christmann A."/>
            <person name="Boemecke M."/>
            <person name="Steckel S."/>
            <person name="Bhattacharyya A."/>
            <person name="Lykidis A."/>
            <person name="Overbeek R."/>
            <person name="Klenk H.-P."/>
            <person name="Gunsalus R.P."/>
            <person name="Fritz H.-J."/>
            <person name="Gottschalk G."/>
        </authorList>
    </citation>
    <scope>NUCLEOTIDE SEQUENCE [LARGE SCALE GENOMIC DNA]</scope>
    <source>
        <strain>ATCC BAA-159 / DSM 3647 / Goe1 / Go1 / JCM 11833 / OCM 88</strain>
    </source>
</reference>
<accession>Q8PW45</accession>
<gene>
    <name evidence="1" type="primary">rpl13</name>
    <name type="ordered locus">MM_1756</name>
</gene>
<evidence type="ECO:0000255" key="1">
    <source>
        <dbReference type="HAMAP-Rule" id="MF_01366"/>
    </source>
</evidence>
<evidence type="ECO:0000305" key="2"/>